<name>BLK_HUMAN</name>
<organism>
    <name type="scientific">Homo sapiens</name>
    <name type="common">Human</name>
    <dbReference type="NCBI Taxonomy" id="9606"/>
    <lineage>
        <taxon>Eukaryota</taxon>
        <taxon>Metazoa</taxon>
        <taxon>Chordata</taxon>
        <taxon>Craniata</taxon>
        <taxon>Vertebrata</taxon>
        <taxon>Euteleostomi</taxon>
        <taxon>Mammalia</taxon>
        <taxon>Eutheria</taxon>
        <taxon>Euarchontoglires</taxon>
        <taxon>Primates</taxon>
        <taxon>Haplorrhini</taxon>
        <taxon>Catarrhini</taxon>
        <taxon>Hominidae</taxon>
        <taxon>Homo</taxon>
    </lineage>
</organism>
<protein>
    <recommendedName>
        <fullName>Tyrosine-protein kinase Blk</fullName>
        <ecNumber evidence="10">2.7.10.2</ecNumber>
    </recommendedName>
    <alternativeName>
        <fullName>B lymphocyte kinase</fullName>
    </alternativeName>
    <alternativeName>
        <fullName>p55-Blk</fullName>
    </alternativeName>
</protein>
<sequence length="505" mass="57706">MGLVSSKKPDKEKPIKEKDKGQWSPLKVSAQDKDAPPLPPLVVFNHLTPPPPDEHLDEDKHFVVALYDYTAMNDRDLQMLKGEKLQVLKGTGDWWLARSLVTGREGYVPSNFVARVESLEMERWFFRSQGRKEAERQLLAPINKAGSFLIRESETNKGAFSLSVKDVTTQGELIKHYKIRCLDEGGYYISPRITFPSLQALVQHYSKKGDGLCQRLTLPCVRPAPQNPWAQDEWEIPRQSLRLVRKLGSGQFGEVWMGYYKNNMKVAIKTLKEGTMSPEAFLGEANVMKALQHERLVRLYAVVTKEPIYIVTEYMARGCLLDFLKTDEGSRLSLPRLIDMSAQIAEGMAYIERMNSIHRDLRAANILVSEALCCKIADFGLARIIDSEYTAQEGAKFPIKWTAPEAIHFGVFTIKADVWSFGVLLMEVVTYGRVPYPGMSNPEVIRNLERGYRMPRPDTCPPELYRGVIAECWRSRPEERPTFEFLQSVLEDFYTATERQYELQP</sequence>
<proteinExistence type="evidence at protein level"/>
<gene>
    <name type="primary">BLK</name>
</gene>
<keyword id="KW-0067">ATP-binding</keyword>
<keyword id="KW-1003">Cell membrane</keyword>
<keyword id="KW-0219">Diabetes mellitus</keyword>
<keyword id="KW-0418">Kinase</keyword>
<keyword id="KW-0449">Lipoprotein</keyword>
<keyword id="KW-0472">Membrane</keyword>
<keyword id="KW-0519">Myristate</keyword>
<keyword id="KW-0547">Nucleotide-binding</keyword>
<keyword id="KW-0597">Phosphoprotein</keyword>
<keyword id="KW-1267">Proteomics identification</keyword>
<keyword id="KW-1185">Reference proteome</keyword>
<keyword id="KW-0727">SH2 domain</keyword>
<keyword id="KW-0728">SH3 domain</keyword>
<keyword id="KW-0808">Transferase</keyword>
<keyword id="KW-0829">Tyrosine-protein kinase</keyword>
<keyword id="KW-0832">Ubl conjugation</keyword>
<accession>P51451</accession>
<accession>Q16291</accession>
<accession>Q96IN1</accession>
<feature type="initiator methionine" description="Removed">
    <location>
        <position position="1"/>
    </location>
</feature>
<feature type="chain" id="PRO_0000088061" description="Tyrosine-protein kinase Blk">
    <location>
        <begin position="2"/>
        <end position="505"/>
    </location>
</feature>
<feature type="domain" description="SH3" evidence="5">
    <location>
        <begin position="58"/>
        <end position="118"/>
    </location>
</feature>
<feature type="domain" description="SH2" evidence="4">
    <location>
        <begin position="124"/>
        <end position="220"/>
    </location>
</feature>
<feature type="domain" description="Protein kinase" evidence="3">
    <location>
        <begin position="241"/>
        <end position="494"/>
    </location>
</feature>
<feature type="region of interest" description="Disordered" evidence="6">
    <location>
        <begin position="1"/>
        <end position="37"/>
    </location>
</feature>
<feature type="compositionally biased region" description="Basic and acidic residues" evidence="6">
    <location>
        <begin position="7"/>
        <end position="21"/>
    </location>
</feature>
<feature type="active site" description="Proton acceptor" evidence="3">
    <location>
        <position position="360"/>
    </location>
</feature>
<feature type="binding site" evidence="3">
    <location>
        <begin position="247"/>
        <end position="255"/>
    </location>
    <ligand>
        <name>ATP</name>
        <dbReference type="ChEBI" id="CHEBI:30616"/>
    </ligand>
</feature>
<feature type="binding site" evidence="3">
    <location>
        <position position="269"/>
    </location>
    <ligand>
        <name>ATP</name>
        <dbReference type="ChEBI" id="CHEBI:30616"/>
    </ligand>
</feature>
<feature type="modified residue" description="Phosphotyrosine; by autocatalysis" evidence="1">
    <location>
        <position position="389"/>
    </location>
</feature>
<feature type="lipid moiety-binding region" description="N-myristoyl glycine" evidence="1">
    <location>
        <position position="2"/>
    </location>
</feature>
<feature type="sequence variant" id="VAR_041672" description="In dbSNP:rs35339715." evidence="8">
    <original>T</original>
    <variation>I</variation>
    <location>
        <position position="48"/>
    </location>
</feature>
<feature type="sequence variant" id="VAR_041673" description="Reduces the enhancing effect of BLK on insulin secretion; reduces the inducing effect of BLK on the expression of PDX1 and NKX6-1; dbSNP:rs55758736." evidence="8 9">
    <original>A</original>
    <variation>T</variation>
    <location>
        <position position="71"/>
    </location>
</feature>
<feature type="sequence conflict" description="In Ref. 1; CAA83965." evidence="12" ref="1">
    <original>V</original>
    <variation>M</variation>
    <location>
        <position position="287"/>
    </location>
</feature>
<feature type="sequence conflict" description="In Ref. 2; AAB33265." evidence="12" ref="2">
    <original>I</original>
    <variation>Y</variation>
    <location>
        <position position="407"/>
    </location>
</feature>
<dbReference type="EC" id="2.7.10.2" evidence="10"/>
<dbReference type="EMBL" id="Z33998">
    <property type="protein sequence ID" value="CAA83965.1"/>
    <property type="molecule type" value="mRNA"/>
</dbReference>
<dbReference type="EMBL" id="S76617">
    <property type="protein sequence ID" value="AAB33265.1"/>
    <property type="molecule type" value="mRNA"/>
</dbReference>
<dbReference type="EMBL" id="AK313751">
    <property type="protein sequence ID" value="BAG36491.1"/>
    <property type="molecule type" value="mRNA"/>
</dbReference>
<dbReference type="EMBL" id="CH471157">
    <property type="protein sequence ID" value="EAW65617.1"/>
    <property type="molecule type" value="Genomic_DNA"/>
</dbReference>
<dbReference type="EMBL" id="BC007371">
    <property type="protein sequence ID" value="AAH07371.1"/>
    <property type="molecule type" value="mRNA"/>
</dbReference>
<dbReference type="EMBL" id="BC032413">
    <property type="protein sequence ID" value="AAH32413.1"/>
    <property type="molecule type" value="mRNA"/>
</dbReference>
<dbReference type="CCDS" id="CCDS5982.1"/>
<dbReference type="PIR" id="I37206">
    <property type="entry name" value="I37206"/>
</dbReference>
<dbReference type="RefSeq" id="NP_001706.2">
    <property type="nucleotide sequence ID" value="NM_001715.2"/>
</dbReference>
<dbReference type="RefSeq" id="XP_047278038.1">
    <property type="nucleotide sequence ID" value="XM_047422082.1"/>
</dbReference>
<dbReference type="RefSeq" id="XP_047278039.1">
    <property type="nucleotide sequence ID" value="XM_047422083.1"/>
</dbReference>
<dbReference type="RefSeq" id="XP_054188228.1">
    <property type="nucleotide sequence ID" value="XM_054332253.1"/>
</dbReference>
<dbReference type="RefSeq" id="XP_054188229.1">
    <property type="nucleotide sequence ID" value="XM_054332254.1"/>
</dbReference>
<dbReference type="RefSeq" id="XP_054216944.1">
    <property type="nucleotide sequence ID" value="XM_054360969.1"/>
</dbReference>
<dbReference type="RefSeq" id="XP_054216945.1">
    <property type="nucleotide sequence ID" value="XM_054360970.1"/>
</dbReference>
<dbReference type="RefSeq" id="XP_054216946.1">
    <property type="nucleotide sequence ID" value="XM_054360971.1"/>
</dbReference>
<dbReference type="SMR" id="P51451"/>
<dbReference type="BioGRID" id="107109">
    <property type="interactions" value="200"/>
</dbReference>
<dbReference type="ELM" id="P51451"/>
<dbReference type="FunCoup" id="P51451">
    <property type="interactions" value="226"/>
</dbReference>
<dbReference type="IntAct" id="P51451">
    <property type="interactions" value="171"/>
</dbReference>
<dbReference type="MINT" id="P51451"/>
<dbReference type="STRING" id="9606.ENSP00000259089"/>
<dbReference type="BindingDB" id="P51451"/>
<dbReference type="ChEMBL" id="CHEMBL2250"/>
<dbReference type="DrugBank" id="DB12010">
    <property type="generic name" value="Fostamatinib"/>
</dbReference>
<dbReference type="DrugBank" id="DB15035">
    <property type="generic name" value="Zanubrutinib"/>
</dbReference>
<dbReference type="DrugCentral" id="P51451"/>
<dbReference type="GuidetoPHARMACOLOGY" id="1940"/>
<dbReference type="CarbonylDB" id="P51451"/>
<dbReference type="iPTMnet" id="P51451"/>
<dbReference type="PhosphoSitePlus" id="P51451"/>
<dbReference type="BioMuta" id="BLK"/>
<dbReference type="DMDM" id="158936749"/>
<dbReference type="CPTAC" id="CPTAC-1777"/>
<dbReference type="CPTAC" id="CPTAC-2895"/>
<dbReference type="CPTAC" id="CPTAC-2896"/>
<dbReference type="jPOST" id="P51451"/>
<dbReference type="MassIVE" id="P51451"/>
<dbReference type="PaxDb" id="9606-ENSP00000259089"/>
<dbReference type="PeptideAtlas" id="P51451"/>
<dbReference type="ProteomicsDB" id="56307"/>
<dbReference type="Antibodypedia" id="3914">
    <property type="antibodies" value="609 antibodies from 38 providers"/>
</dbReference>
<dbReference type="DNASU" id="640"/>
<dbReference type="Ensembl" id="ENST00000259089.9">
    <property type="protein sequence ID" value="ENSP00000259089.4"/>
    <property type="gene ID" value="ENSG00000136573.16"/>
</dbReference>
<dbReference type="Ensembl" id="ENST00000646615.3">
    <property type="protein sequence ID" value="ENSP00000494522.3"/>
    <property type="gene ID" value="ENSG00000285369.3"/>
</dbReference>
<dbReference type="GeneID" id="640"/>
<dbReference type="KEGG" id="hsa:640"/>
<dbReference type="MANE-Select" id="ENST00000259089.9">
    <property type="protein sequence ID" value="ENSP00000259089.4"/>
    <property type="RefSeq nucleotide sequence ID" value="NM_001715.3"/>
    <property type="RefSeq protein sequence ID" value="NP_001706.2"/>
</dbReference>
<dbReference type="UCSC" id="uc003wty.4">
    <property type="organism name" value="human"/>
</dbReference>
<dbReference type="AGR" id="HGNC:1057"/>
<dbReference type="CTD" id="640"/>
<dbReference type="DisGeNET" id="640"/>
<dbReference type="GeneCards" id="BLK"/>
<dbReference type="GeneReviews" id="BLK"/>
<dbReference type="HGNC" id="HGNC:1057">
    <property type="gene designation" value="BLK"/>
</dbReference>
<dbReference type="HPA" id="ENSG00000136573">
    <property type="expression patterns" value="Group enriched (intestine, lymphoid tissue)"/>
</dbReference>
<dbReference type="MalaCards" id="BLK"/>
<dbReference type="MIM" id="191305">
    <property type="type" value="gene"/>
</dbReference>
<dbReference type="MIM" id="613375">
    <property type="type" value="phenotype"/>
</dbReference>
<dbReference type="neXtProt" id="NX_P51451"/>
<dbReference type="OpenTargets" id="ENSG00000136573"/>
<dbReference type="Orphanet" id="552">
    <property type="disease" value="MODY"/>
</dbReference>
<dbReference type="Orphanet" id="536">
    <property type="disease" value="Systemic lupus erythematosus"/>
</dbReference>
<dbReference type="PharmGKB" id="PA25368"/>
<dbReference type="VEuPathDB" id="HostDB:ENSG00000136573"/>
<dbReference type="eggNOG" id="KOG0197">
    <property type="taxonomic scope" value="Eukaryota"/>
</dbReference>
<dbReference type="GeneTree" id="ENSGT00940000159864"/>
<dbReference type="InParanoid" id="P51451"/>
<dbReference type="OMA" id="TLCCKIG"/>
<dbReference type="OrthoDB" id="4062651at2759"/>
<dbReference type="PAN-GO" id="P51451">
    <property type="GO annotations" value="18 GO annotations based on evolutionary models"/>
</dbReference>
<dbReference type="PhylomeDB" id="P51451"/>
<dbReference type="TreeFam" id="TF351634"/>
<dbReference type="BRENDA" id="2.7.10.2">
    <property type="organism ID" value="2681"/>
</dbReference>
<dbReference type="PathwayCommons" id="P51451"/>
<dbReference type="Reactome" id="R-HSA-8939245">
    <property type="pathway name" value="RUNX1 regulates transcription of genes involved in BCR signaling"/>
</dbReference>
<dbReference type="Reactome" id="R-HSA-983695">
    <property type="pathway name" value="Antigen activates B Cell Receptor (BCR) leading to generation of second messengers"/>
</dbReference>
<dbReference type="SignaLink" id="P51451"/>
<dbReference type="SIGNOR" id="P51451"/>
<dbReference type="BioGRID-ORCS" id="640">
    <property type="hits" value="9 hits in 1175 CRISPR screens"/>
</dbReference>
<dbReference type="ChiTaRS" id="BLK">
    <property type="organism name" value="human"/>
</dbReference>
<dbReference type="GeneWiki" id="Tyrosine-protein_kinase_BLK"/>
<dbReference type="GenomeRNAi" id="640"/>
<dbReference type="Pharos" id="P51451">
    <property type="development level" value="Tchem"/>
</dbReference>
<dbReference type="PRO" id="PR:P51451"/>
<dbReference type="Proteomes" id="UP000005640">
    <property type="component" value="Chromosome 8"/>
</dbReference>
<dbReference type="RNAct" id="P51451">
    <property type="molecule type" value="protein"/>
</dbReference>
<dbReference type="Bgee" id="ENSG00000136573">
    <property type="expression patterns" value="Expressed in spleen and 93 other cell types or tissues"/>
</dbReference>
<dbReference type="ExpressionAtlas" id="P51451">
    <property type="expression patterns" value="baseline and differential"/>
</dbReference>
<dbReference type="GO" id="GO:0005829">
    <property type="term" value="C:cytosol"/>
    <property type="evidence" value="ECO:0000304"/>
    <property type="project" value="Reactome"/>
</dbReference>
<dbReference type="GO" id="GO:0005886">
    <property type="term" value="C:plasma membrane"/>
    <property type="evidence" value="ECO:0000318"/>
    <property type="project" value="GO_Central"/>
</dbReference>
<dbReference type="GO" id="GO:0005524">
    <property type="term" value="F:ATP binding"/>
    <property type="evidence" value="ECO:0007669"/>
    <property type="project" value="UniProtKB-KW"/>
</dbReference>
<dbReference type="GO" id="GO:0004715">
    <property type="term" value="F:non-membrane spanning protein tyrosine kinase activity"/>
    <property type="evidence" value="ECO:0000314"/>
    <property type="project" value="UniProtKB"/>
</dbReference>
<dbReference type="GO" id="GO:0004713">
    <property type="term" value="F:protein tyrosine kinase activity"/>
    <property type="evidence" value="ECO:0000314"/>
    <property type="project" value="UniProtKB"/>
</dbReference>
<dbReference type="GO" id="GO:0005102">
    <property type="term" value="F:signaling receptor binding"/>
    <property type="evidence" value="ECO:0000318"/>
    <property type="project" value="GO_Central"/>
</dbReference>
<dbReference type="GO" id="GO:0050853">
    <property type="term" value="P:B cell receptor signaling pathway"/>
    <property type="evidence" value="ECO:0000314"/>
    <property type="project" value="UniProtKB"/>
</dbReference>
<dbReference type="GO" id="GO:0030154">
    <property type="term" value="P:cell differentiation"/>
    <property type="evidence" value="ECO:0000318"/>
    <property type="project" value="GO_Central"/>
</dbReference>
<dbReference type="GO" id="GO:0007169">
    <property type="term" value="P:cell surface receptor protein tyrosine kinase signaling pathway"/>
    <property type="evidence" value="ECO:0000318"/>
    <property type="project" value="GO_Central"/>
</dbReference>
<dbReference type="GO" id="GO:0035556">
    <property type="term" value="P:intracellular signal transduction"/>
    <property type="evidence" value="ECO:0000304"/>
    <property type="project" value="ProtInc"/>
</dbReference>
<dbReference type="GO" id="GO:0018108">
    <property type="term" value="P:peptidyl-tyrosine phosphorylation"/>
    <property type="evidence" value="ECO:0000314"/>
    <property type="project" value="UniProtKB"/>
</dbReference>
<dbReference type="GO" id="GO:0032024">
    <property type="term" value="P:positive regulation of insulin secretion"/>
    <property type="evidence" value="ECO:0000315"/>
    <property type="project" value="UniProtKB"/>
</dbReference>
<dbReference type="CDD" id="cd10371">
    <property type="entry name" value="SH2_Src_Blk"/>
    <property type="match status" value="1"/>
</dbReference>
<dbReference type="CDD" id="cd12009">
    <property type="entry name" value="SH3_Blk"/>
    <property type="match status" value="1"/>
</dbReference>
<dbReference type="FunFam" id="1.10.510.10:FF:000004">
    <property type="entry name" value="Tyrosine-protein kinase"/>
    <property type="match status" value="1"/>
</dbReference>
<dbReference type="FunFam" id="2.30.30.40:FF:000211">
    <property type="entry name" value="Tyrosine-protein kinase"/>
    <property type="match status" value="1"/>
</dbReference>
<dbReference type="FunFam" id="3.30.200.20:FF:000036">
    <property type="entry name" value="Tyrosine-protein kinase"/>
    <property type="match status" value="1"/>
</dbReference>
<dbReference type="FunFam" id="3.30.505.10:FF:000010">
    <property type="entry name" value="Tyrosine-protein kinase"/>
    <property type="match status" value="1"/>
</dbReference>
<dbReference type="Gene3D" id="3.30.200.20">
    <property type="entry name" value="Phosphorylase Kinase, domain 1"/>
    <property type="match status" value="1"/>
</dbReference>
<dbReference type="Gene3D" id="3.30.505.10">
    <property type="entry name" value="SH2 domain"/>
    <property type="match status" value="1"/>
</dbReference>
<dbReference type="Gene3D" id="2.30.30.40">
    <property type="entry name" value="SH3 Domains"/>
    <property type="match status" value="1"/>
</dbReference>
<dbReference type="Gene3D" id="1.10.510.10">
    <property type="entry name" value="Transferase(Phosphotransferase) domain 1"/>
    <property type="match status" value="1"/>
</dbReference>
<dbReference type="InterPro" id="IPR035853">
    <property type="entry name" value="Blk_SH2"/>
</dbReference>
<dbReference type="InterPro" id="IPR011009">
    <property type="entry name" value="Kinase-like_dom_sf"/>
</dbReference>
<dbReference type="InterPro" id="IPR050198">
    <property type="entry name" value="Non-receptor_tyrosine_kinases"/>
</dbReference>
<dbReference type="InterPro" id="IPR000719">
    <property type="entry name" value="Prot_kinase_dom"/>
</dbReference>
<dbReference type="InterPro" id="IPR017441">
    <property type="entry name" value="Protein_kinase_ATP_BS"/>
</dbReference>
<dbReference type="InterPro" id="IPR001245">
    <property type="entry name" value="Ser-Thr/Tyr_kinase_cat_dom"/>
</dbReference>
<dbReference type="InterPro" id="IPR000980">
    <property type="entry name" value="SH2"/>
</dbReference>
<dbReference type="InterPro" id="IPR036860">
    <property type="entry name" value="SH2_dom_sf"/>
</dbReference>
<dbReference type="InterPro" id="IPR036028">
    <property type="entry name" value="SH3-like_dom_sf"/>
</dbReference>
<dbReference type="InterPro" id="IPR001452">
    <property type="entry name" value="SH3_domain"/>
</dbReference>
<dbReference type="InterPro" id="IPR020635">
    <property type="entry name" value="Tyr_kinase_cat_dom"/>
</dbReference>
<dbReference type="PANTHER" id="PTHR24418">
    <property type="entry name" value="TYROSINE-PROTEIN KINASE"/>
    <property type="match status" value="1"/>
</dbReference>
<dbReference type="Pfam" id="PF07714">
    <property type="entry name" value="PK_Tyr_Ser-Thr"/>
    <property type="match status" value="1"/>
</dbReference>
<dbReference type="Pfam" id="PF00017">
    <property type="entry name" value="SH2"/>
    <property type="match status" value="1"/>
</dbReference>
<dbReference type="Pfam" id="PF00018">
    <property type="entry name" value="SH3_1"/>
    <property type="match status" value="1"/>
</dbReference>
<dbReference type="PRINTS" id="PR00401">
    <property type="entry name" value="SH2DOMAIN"/>
</dbReference>
<dbReference type="PRINTS" id="PR00452">
    <property type="entry name" value="SH3DOMAIN"/>
</dbReference>
<dbReference type="PRINTS" id="PR00109">
    <property type="entry name" value="TYRKINASE"/>
</dbReference>
<dbReference type="SMART" id="SM00252">
    <property type="entry name" value="SH2"/>
    <property type="match status" value="1"/>
</dbReference>
<dbReference type="SMART" id="SM00326">
    <property type="entry name" value="SH3"/>
    <property type="match status" value="1"/>
</dbReference>
<dbReference type="SMART" id="SM00219">
    <property type="entry name" value="TyrKc"/>
    <property type="match status" value="1"/>
</dbReference>
<dbReference type="SUPFAM" id="SSF56112">
    <property type="entry name" value="Protein kinase-like (PK-like)"/>
    <property type="match status" value="1"/>
</dbReference>
<dbReference type="SUPFAM" id="SSF55550">
    <property type="entry name" value="SH2 domain"/>
    <property type="match status" value="1"/>
</dbReference>
<dbReference type="SUPFAM" id="SSF50044">
    <property type="entry name" value="SH3-domain"/>
    <property type="match status" value="1"/>
</dbReference>
<dbReference type="PROSITE" id="PS00107">
    <property type="entry name" value="PROTEIN_KINASE_ATP"/>
    <property type="match status" value="1"/>
</dbReference>
<dbReference type="PROSITE" id="PS50011">
    <property type="entry name" value="PROTEIN_KINASE_DOM"/>
    <property type="match status" value="1"/>
</dbReference>
<dbReference type="PROSITE" id="PS50001">
    <property type="entry name" value="SH2"/>
    <property type="match status" value="1"/>
</dbReference>
<dbReference type="PROSITE" id="PS50002">
    <property type="entry name" value="SH3"/>
    <property type="match status" value="1"/>
</dbReference>
<comment type="function">
    <text evidence="2 9 10 11">Non-receptor tyrosine kinase involved in B-lymphocyte development, differentiation and signaling (By similarity). B-cell receptor (BCR) signaling requires a tight regulation of several protein tyrosine kinases and phosphatases, and associated coreceptors (By similarity). Binding of antigen to the B-cell antigen receptor (BCR) triggers signaling that ultimately leads to B-cell activation (By similarity). Signaling through BLK plays an important role in transmitting signals through surface immunoglobulins and supports the pro-B to pre-B transition, as well as the signaling for growth arrest and apoptosis downstream of B-cell receptor (By similarity). Specifically binds and phosphorylates CD79A at 'Tyr-188'and 'Tyr-199', as well as CD79B at 'Tyr-196' and 'Tyr-207' (By similarity). Also phosphorylates the immunoglobulin G receptors FCGR2A, FCGR2B and FCGR2C (PubMed:8756631). With FYN and LYN, plays an essential role in pre-B-cell receptor (pre-BCR)-mediated NF-kappa-B activation (By similarity). Also contributes to BTK activation by indirectly stimulating BTK intramolecular autophosphorylation (By similarity). In pancreatic islets, acts as a modulator of beta-cells function through the up-regulation of PDX1 and NKX6-1 and consequent stimulation of insulin secretion in response to glucose (PubMed:19667185). Phosphorylates CGAS, promoting retention of CGAS in the cytosol (PubMed:30356214).</text>
</comment>
<comment type="catalytic activity">
    <reaction evidence="10">
        <text>L-tyrosyl-[protein] + ATP = O-phospho-L-tyrosyl-[protein] + ADP + H(+)</text>
        <dbReference type="Rhea" id="RHEA:10596"/>
        <dbReference type="Rhea" id="RHEA-COMP:10136"/>
        <dbReference type="Rhea" id="RHEA-COMP:20101"/>
        <dbReference type="ChEBI" id="CHEBI:15378"/>
        <dbReference type="ChEBI" id="CHEBI:30616"/>
        <dbReference type="ChEBI" id="CHEBI:46858"/>
        <dbReference type="ChEBI" id="CHEBI:61978"/>
        <dbReference type="ChEBI" id="CHEBI:456216"/>
        <dbReference type="EC" id="2.7.10.2"/>
    </reaction>
    <physiologicalReaction direction="left-to-right" evidence="10">
        <dbReference type="Rhea" id="RHEA:10597"/>
    </physiologicalReaction>
</comment>
<comment type="activity regulation">
    <text evidence="1">Antibody-mediated surface engagement of the B-cell antigen receptor (BCR) which results in the phosphorylation of BLK on tyrosine residues, stimulates the enzymatic activity.</text>
</comment>
<comment type="subunit">
    <text evidence="1">Interacts with CBL (via SH2 domain). Interacts with CD79A and CD79B (via SH2 domain) (By similarity).</text>
</comment>
<comment type="interaction">
    <interactant intactId="EBI-2105445">
        <id>P51451</id>
    </interactant>
    <interactant intactId="EBI-608057">
        <id>P10275</id>
        <label>AR</label>
    </interactant>
    <organismsDiffer>false</organismsDiffer>
    <experiments>3</experiments>
</comment>
<comment type="interaction">
    <interactant intactId="EBI-2105445">
        <id>P51451</id>
    </interactant>
    <interactant intactId="EBI-2837677">
        <id>Q8NDB2</id>
        <label>BANK1</label>
    </interactant>
    <organismsDiffer>false</organismsDiffer>
    <experiments>6</experiments>
</comment>
<comment type="interaction">
    <interactant intactId="EBI-2105445">
        <id>P51451</id>
    </interactant>
    <interactant intactId="EBI-514538">
        <id>Q13490</id>
        <label>BIRC2</label>
    </interactant>
    <organismsDiffer>false</organismsDiffer>
    <experiments>3</experiments>
</comment>
<comment type="interaction">
    <interactant intactId="EBI-2105445">
        <id>P51451</id>
    </interactant>
    <interactant intactId="EBI-910">
        <id>P46109</id>
        <label>CRKL</label>
    </interactant>
    <organismsDiffer>false</organismsDiffer>
    <experiments>3</experiments>
</comment>
<comment type="interaction">
    <interactant intactId="EBI-2105445">
        <id>P51451</id>
    </interactant>
    <interactant intactId="EBI-718488">
        <id>O43281</id>
        <label>EFS</label>
    </interactant>
    <organismsDiffer>false</organismsDiffer>
    <experiments>5</experiments>
</comment>
<comment type="interaction">
    <interactant intactId="EBI-2105445">
        <id>P51451</id>
    </interactant>
    <interactant intactId="EBI-11525448">
        <id>O43281-2</id>
        <label>EFS</label>
    </interactant>
    <organismsDiffer>false</organismsDiffer>
    <experiments>3</experiments>
</comment>
<comment type="interaction">
    <interactant intactId="EBI-2105445">
        <id>P51451</id>
    </interactant>
    <interactant intactId="EBI-297353">
        <id>P00533</id>
        <label>EGFR</label>
    </interactant>
    <organismsDiffer>false</organismsDiffer>
    <experiments>3</experiments>
</comment>
<comment type="interaction">
    <interactant intactId="EBI-2105445">
        <id>P51451</id>
    </interactant>
    <interactant intactId="EBI-11533409">
        <id>Q96Q35-2</id>
        <label>FLACC1</label>
    </interactant>
    <organismsDiffer>false</organismsDiffer>
    <experiments>5</experiments>
</comment>
<comment type="interaction">
    <interactant intactId="EBI-2105445">
        <id>P51451</id>
    </interactant>
    <interactant intactId="EBI-11022345">
        <id>P51114-2</id>
        <label>FXR1</label>
    </interactant>
    <organismsDiffer>false</organismsDiffer>
    <experiments>3</experiments>
</comment>
<comment type="interaction">
    <interactant intactId="EBI-2105445">
        <id>P51451</id>
    </interactant>
    <interactant intactId="EBI-740459">
        <id>P51116</id>
        <label>FXR2</label>
    </interactant>
    <organismsDiffer>false</organismsDiffer>
    <experiments>3</experiments>
</comment>
<comment type="interaction">
    <interactant intactId="EBI-2105445">
        <id>P51451</id>
    </interactant>
    <interactant intactId="EBI-517684">
        <id>Q13480</id>
        <label>GAB1</label>
    </interactant>
    <organismsDiffer>false</organismsDiffer>
    <experiments>3</experiments>
</comment>
<comment type="interaction">
    <interactant intactId="EBI-2105445">
        <id>P51451</id>
    </interactant>
    <interactant intactId="EBI-12353035">
        <id>Q13322-4</id>
        <label>GRB10</label>
    </interactant>
    <organismsDiffer>false</organismsDiffer>
    <experiments>3</experiments>
</comment>
<comment type="interaction">
    <interactant intactId="EBI-2105445">
        <id>P51451</id>
    </interactant>
    <interactant intactId="EBI-7116203">
        <id>O75031</id>
        <label>HSF2BP</label>
    </interactant>
    <organismsDiffer>false</organismsDiffer>
    <experiments>3</experiments>
</comment>
<comment type="interaction">
    <interactant intactId="EBI-2105445">
        <id>P51451</id>
    </interactant>
    <interactant intactId="EBI-352572">
        <id>P08238</id>
        <label>HSP90AB1</label>
    </interactant>
    <organismsDiffer>false</organismsDiffer>
    <experiments>3</experiments>
</comment>
<comment type="interaction">
    <interactant intactId="EBI-2105445">
        <id>P51451</id>
    </interactant>
    <interactant intactId="EBI-747204">
        <id>Q9UKT9</id>
        <label>IKZF3</label>
    </interactant>
    <organismsDiffer>false</organismsDiffer>
    <experiments>3</experiments>
</comment>
<comment type="interaction">
    <interactant intactId="EBI-2105445">
        <id>P51451</id>
    </interactant>
    <interactant intactId="EBI-2680803">
        <id>Q96N16</id>
        <label>JAKMIP1</label>
    </interactant>
    <organismsDiffer>false</organismsDiffer>
    <experiments>3</experiments>
</comment>
<comment type="interaction">
    <interactant intactId="EBI-2105445">
        <id>P51451</id>
    </interactant>
    <interactant intactId="EBI-1379503">
        <id>P10721</id>
        <label>KIT</label>
    </interactant>
    <organismsDiffer>false</organismsDiffer>
    <experiments>5</experiments>
</comment>
<comment type="interaction">
    <interactant intactId="EBI-2105445">
        <id>P51451</id>
    </interactant>
    <interactant intactId="EBI-10172526">
        <id>Q9UJV3-2</id>
        <label>MID2</label>
    </interactant>
    <organismsDiffer>false</organismsDiffer>
    <experiments>3</experiments>
</comment>
<comment type="interaction">
    <interactant intactId="EBI-2105445">
        <id>P51451</id>
    </interactant>
    <interactant intactId="EBI-79165">
        <id>Q9NRD5</id>
        <label>PICK1</label>
    </interactant>
    <organismsDiffer>false</organismsDiffer>
    <experiments>3</experiments>
</comment>
<comment type="interaction">
    <interactant intactId="EBI-2105445">
        <id>P51451</id>
    </interactant>
    <interactant intactId="EBI-9090282">
        <id>P27986-2</id>
        <label>PIK3R1</label>
    </interactant>
    <organismsDiffer>false</organismsDiffer>
    <experiments>3</experiments>
</comment>
<comment type="interaction">
    <interactant intactId="EBI-2105445">
        <id>P51451</id>
    </interactant>
    <interactant intactId="EBI-79893">
        <id>Q92569</id>
        <label>PIK3R3</label>
    </interactant>
    <organismsDiffer>false</organismsDiffer>
    <experiments>3</experiments>
</comment>
<comment type="interaction">
    <interactant intactId="EBI-2105445">
        <id>P51451</id>
    </interactant>
    <interactant intactId="EBI-11954250">
        <id>P49023-2</id>
        <label>PXN</label>
    </interactant>
    <organismsDiffer>false</organismsDiffer>
    <experiments>3</experiments>
</comment>
<comment type="interaction">
    <interactant intactId="EBI-2105445">
        <id>P51451</id>
    </interactant>
    <interactant intactId="EBI-3923013">
        <id>O14796</id>
        <label>SH2D1B</label>
    </interactant>
    <organismsDiffer>false</organismsDiffer>
    <experiments>3</experiments>
</comment>
<comment type="interaction">
    <interactant intactId="EBI-2105445">
        <id>P51451</id>
    </interactant>
    <interactant intactId="EBI-17630587">
        <id>Q13239-3</id>
        <label>SLA</label>
    </interactant>
    <organismsDiffer>false</organismsDiffer>
    <experiments>3</experiments>
</comment>
<comment type="interaction">
    <interactant intactId="EBI-2105445">
        <id>P51451</id>
    </interactant>
    <interactant intactId="EBI-714146">
        <id>O14543</id>
        <label>SOCS3</label>
    </interactant>
    <organismsDiffer>false</organismsDiffer>
    <experiments>3</experiments>
</comment>
<comment type="interaction">
    <interactant intactId="EBI-2105445">
        <id>P51451</id>
    </interactant>
    <interactant intactId="EBI-2902395">
        <id>Q9BWW4</id>
        <label>SSBP3</label>
    </interactant>
    <organismsDiffer>false</organismsDiffer>
    <experiments>3</experiments>
</comment>
<comment type="interaction">
    <interactant intactId="EBI-2105445">
        <id>P51451</id>
    </interactant>
    <interactant intactId="EBI-1553984">
        <id>Q9UGK3</id>
        <label>STAP2</label>
    </interactant>
    <organismsDiffer>false</organismsDiffer>
    <experiments>3</experiments>
</comment>
<comment type="interaction">
    <interactant intactId="EBI-2105445">
        <id>P51451</id>
    </interactant>
    <interactant intactId="EBI-518675">
        <id>P40763</id>
        <label>STAT3</label>
    </interactant>
    <organismsDiffer>false</organismsDiffer>
    <experiments>9</experiments>
</comment>
<comment type="interaction">
    <interactant intactId="EBI-2105445">
        <id>P51451</id>
    </interactant>
    <interactant intactId="EBI-7574149">
        <id>Q8IZU3</id>
        <label>SYCP3</label>
    </interactant>
    <organismsDiffer>false</organismsDiffer>
    <experiments>2</experiments>
</comment>
<comment type="interaction">
    <interactant intactId="EBI-2105445">
        <id>P51451</id>
    </interactant>
    <interactant intactId="EBI-2819865">
        <id>O95551</id>
        <label>TDP2</label>
    </interactant>
    <organismsDiffer>false</organismsDiffer>
    <experiments>3</experiments>
</comment>
<comment type="interaction">
    <interactant intactId="EBI-2105445">
        <id>P51451</id>
    </interactant>
    <interactant intactId="EBI-353844">
        <id>P08670</id>
        <label>VIM</label>
    </interactant>
    <organismsDiffer>false</organismsDiffer>
    <experiments>3</experiments>
</comment>
<comment type="interaction">
    <interactant intactId="EBI-2105445">
        <id>P51451</id>
    </interactant>
    <interactant intactId="EBI-10188476">
        <id>A0A0C4DGF1</id>
        <label>ZBTB32</label>
    </interactant>
    <organismsDiffer>false</organismsDiffer>
    <experiments>3</experiments>
</comment>
<comment type="interaction">
    <interactant intactId="EBI-2105445">
        <id>P51451</id>
    </interactant>
    <interactant intactId="EBI-12287587">
        <id>B2RXF5</id>
        <label>ZBTB42</label>
    </interactant>
    <organismsDiffer>false</organismsDiffer>
    <experiments>3</experiments>
</comment>
<comment type="interaction">
    <interactant intactId="EBI-2105445">
        <id>P51451</id>
    </interactant>
    <interactant intactId="EBI-742740">
        <id>Q96BR9</id>
        <label>ZBTB8A</label>
    </interactant>
    <organismsDiffer>false</organismsDiffer>
    <experiments>3</experiments>
</comment>
<comment type="interaction">
    <interactant intactId="EBI-2105445">
        <id>P51451</id>
    </interactant>
    <interactant intactId="EBI-10251462">
        <id>Q6NX45</id>
        <label>ZNF774</label>
    </interactant>
    <organismsDiffer>false</organismsDiffer>
    <experiments>3</experiments>
</comment>
<comment type="subcellular location">
    <subcellularLocation>
        <location evidence="1">Cell membrane</location>
        <topology evidence="1">Lipid-anchor</topology>
    </subcellularLocation>
    <text evidence="1">Present and active in lipid rafts. Membrane location is required for the phosphorylation of CD79A and CD79B (By similarity).</text>
</comment>
<comment type="tissue specificity">
    <text evidence="9">Expressed in lymphatic organs, pancreatic islets, Leydig cells, striate ducts of salivary glands and hair follicles.</text>
</comment>
<comment type="induction">
    <text evidence="7">Expression is under the control of NF-kappa-B as well as the B-cell specific transcription factors PAX5 and EBF1.</text>
</comment>
<comment type="PTM">
    <text evidence="1">Phosphorylated on tyrosine residues after antibody-mediated surface engagement of the B-cell antigen receptor (BCR).</text>
</comment>
<comment type="PTM">
    <text evidence="1">Ubiquitination of activated BLK by the UBE3A ubiquitin protein ligase leads to its degradation by the ubiquitin-proteasome pathway.</text>
</comment>
<comment type="disease" evidence="9">
    <disease id="DI-02787">
        <name>Maturity-onset diabetes of the young 11</name>
        <acronym>MODY11</acronym>
        <description>A form of diabetes that is characterized by an autosomal dominant mode of inheritance, onset in childhood or early adulthood (usually before 25 years of age), a primary defect in insulin secretion and frequent insulin-independence at the beginning of the disease.</description>
        <dbReference type="MIM" id="613375"/>
    </disease>
    <text>The disease is caused by variants affecting the gene represented in this entry.</text>
</comment>
<comment type="similarity">
    <text evidence="3">Belongs to the protein kinase superfamily. Tyr protein kinase family. SRC subfamily.</text>
</comment>
<reference key="1">
    <citation type="journal article" date="1995" name="J. Immunol.">
        <title>Molecular cloning, characterization, and chromosomal localization of a human lymphoid tyrosine kinase related to murine Blk.</title>
        <authorList>
            <person name="Islam K.B."/>
            <person name="Rabbani H."/>
            <person name="Larsson C."/>
            <person name="Sanders R."/>
            <person name="Smith C.I."/>
        </authorList>
    </citation>
    <scope>NUCLEOTIDE SEQUENCE [MRNA]</scope>
</reference>
<reference key="2">
    <citation type="journal article" date="1995" name="Oncogene">
        <title>Molecular cloning and chromosomal localization of the human homologue of a B-lymphocyte specific protein tyrosine kinase (blk).</title>
        <authorList>
            <person name="Drebin J.A."/>
            <person name="Hartzell S.W."/>
            <person name="Griffin C."/>
            <person name="Campbell M.J."/>
            <person name="Niederhuber J.E."/>
        </authorList>
    </citation>
    <scope>NUCLEOTIDE SEQUENCE [MRNA]</scope>
</reference>
<reference key="3">
    <citation type="journal article" date="2004" name="Nat. Genet.">
        <title>Complete sequencing and characterization of 21,243 full-length human cDNAs.</title>
        <authorList>
            <person name="Ota T."/>
            <person name="Suzuki Y."/>
            <person name="Nishikawa T."/>
            <person name="Otsuki T."/>
            <person name="Sugiyama T."/>
            <person name="Irie R."/>
            <person name="Wakamatsu A."/>
            <person name="Hayashi K."/>
            <person name="Sato H."/>
            <person name="Nagai K."/>
            <person name="Kimura K."/>
            <person name="Makita H."/>
            <person name="Sekine M."/>
            <person name="Obayashi M."/>
            <person name="Nishi T."/>
            <person name="Shibahara T."/>
            <person name="Tanaka T."/>
            <person name="Ishii S."/>
            <person name="Yamamoto J."/>
            <person name="Saito K."/>
            <person name="Kawai Y."/>
            <person name="Isono Y."/>
            <person name="Nakamura Y."/>
            <person name="Nagahari K."/>
            <person name="Murakami K."/>
            <person name="Yasuda T."/>
            <person name="Iwayanagi T."/>
            <person name="Wagatsuma M."/>
            <person name="Shiratori A."/>
            <person name="Sudo H."/>
            <person name="Hosoiri T."/>
            <person name="Kaku Y."/>
            <person name="Kodaira H."/>
            <person name="Kondo H."/>
            <person name="Sugawara M."/>
            <person name="Takahashi M."/>
            <person name="Kanda K."/>
            <person name="Yokoi T."/>
            <person name="Furuya T."/>
            <person name="Kikkawa E."/>
            <person name="Omura Y."/>
            <person name="Abe K."/>
            <person name="Kamihara K."/>
            <person name="Katsuta N."/>
            <person name="Sato K."/>
            <person name="Tanikawa M."/>
            <person name="Yamazaki M."/>
            <person name="Ninomiya K."/>
            <person name="Ishibashi T."/>
            <person name="Yamashita H."/>
            <person name="Murakawa K."/>
            <person name="Fujimori K."/>
            <person name="Tanai H."/>
            <person name="Kimata M."/>
            <person name="Watanabe M."/>
            <person name="Hiraoka S."/>
            <person name="Chiba Y."/>
            <person name="Ishida S."/>
            <person name="Ono Y."/>
            <person name="Takiguchi S."/>
            <person name="Watanabe S."/>
            <person name="Yosida M."/>
            <person name="Hotuta T."/>
            <person name="Kusano J."/>
            <person name="Kanehori K."/>
            <person name="Takahashi-Fujii A."/>
            <person name="Hara H."/>
            <person name="Tanase T.-O."/>
            <person name="Nomura Y."/>
            <person name="Togiya S."/>
            <person name="Komai F."/>
            <person name="Hara R."/>
            <person name="Takeuchi K."/>
            <person name="Arita M."/>
            <person name="Imose N."/>
            <person name="Musashino K."/>
            <person name="Yuuki H."/>
            <person name="Oshima A."/>
            <person name="Sasaki N."/>
            <person name="Aotsuka S."/>
            <person name="Yoshikawa Y."/>
            <person name="Matsunawa H."/>
            <person name="Ichihara T."/>
            <person name="Shiohata N."/>
            <person name="Sano S."/>
            <person name="Moriya S."/>
            <person name="Momiyama H."/>
            <person name="Satoh N."/>
            <person name="Takami S."/>
            <person name="Terashima Y."/>
            <person name="Suzuki O."/>
            <person name="Nakagawa S."/>
            <person name="Senoh A."/>
            <person name="Mizoguchi H."/>
            <person name="Goto Y."/>
            <person name="Shimizu F."/>
            <person name="Wakebe H."/>
            <person name="Hishigaki H."/>
            <person name="Watanabe T."/>
            <person name="Sugiyama A."/>
            <person name="Takemoto M."/>
            <person name="Kawakami B."/>
            <person name="Yamazaki M."/>
            <person name="Watanabe K."/>
            <person name="Kumagai A."/>
            <person name="Itakura S."/>
            <person name="Fukuzumi Y."/>
            <person name="Fujimori Y."/>
            <person name="Komiyama M."/>
            <person name="Tashiro H."/>
            <person name="Tanigami A."/>
            <person name="Fujiwara T."/>
            <person name="Ono T."/>
            <person name="Yamada K."/>
            <person name="Fujii Y."/>
            <person name="Ozaki K."/>
            <person name="Hirao M."/>
            <person name="Ohmori Y."/>
            <person name="Kawabata A."/>
            <person name="Hikiji T."/>
            <person name="Kobatake N."/>
            <person name="Inagaki H."/>
            <person name="Ikema Y."/>
            <person name="Okamoto S."/>
            <person name="Okitani R."/>
            <person name="Kawakami T."/>
            <person name="Noguchi S."/>
            <person name="Itoh T."/>
            <person name="Shigeta K."/>
            <person name="Senba T."/>
            <person name="Matsumura K."/>
            <person name="Nakajima Y."/>
            <person name="Mizuno T."/>
            <person name="Morinaga M."/>
            <person name="Sasaki M."/>
            <person name="Togashi T."/>
            <person name="Oyama M."/>
            <person name="Hata H."/>
            <person name="Watanabe M."/>
            <person name="Komatsu T."/>
            <person name="Mizushima-Sugano J."/>
            <person name="Satoh T."/>
            <person name="Shirai Y."/>
            <person name="Takahashi Y."/>
            <person name="Nakagawa K."/>
            <person name="Okumura K."/>
            <person name="Nagase T."/>
            <person name="Nomura N."/>
            <person name="Kikuchi H."/>
            <person name="Masuho Y."/>
            <person name="Yamashita R."/>
            <person name="Nakai K."/>
            <person name="Yada T."/>
            <person name="Nakamura Y."/>
            <person name="Ohara O."/>
            <person name="Isogai T."/>
            <person name="Sugano S."/>
        </authorList>
    </citation>
    <scope>NUCLEOTIDE SEQUENCE [LARGE SCALE MRNA]</scope>
    <source>
        <tissue>Spleen</tissue>
    </source>
</reference>
<reference key="4">
    <citation type="submission" date="2005-07" db="EMBL/GenBank/DDBJ databases">
        <authorList>
            <person name="Mural R.J."/>
            <person name="Istrail S."/>
            <person name="Sutton G."/>
            <person name="Florea L."/>
            <person name="Halpern A.L."/>
            <person name="Mobarry C.M."/>
            <person name="Lippert R."/>
            <person name="Walenz B."/>
            <person name="Shatkay H."/>
            <person name="Dew I."/>
            <person name="Miller J.R."/>
            <person name="Flanigan M.J."/>
            <person name="Edwards N.J."/>
            <person name="Bolanos R."/>
            <person name="Fasulo D."/>
            <person name="Halldorsson B.V."/>
            <person name="Hannenhalli S."/>
            <person name="Turner R."/>
            <person name="Yooseph S."/>
            <person name="Lu F."/>
            <person name="Nusskern D.R."/>
            <person name="Shue B.C."/>
            <person name="Zheng X.H."/>
            <person name="Zhong F."/>
            <person name="Delcher A.L."/>
            <person name="Huson D.H."/>
            <person name="Kravitz S.A."/>
            <person name="Mouchard L."/>
            <person name="Reinert K."/>
            <person name="Remington K.A."/>
            <person name="Clark A.G."/>
            <person name="Waterman M.S."/>
            <person name="Eichler E.E."/>
            <person name="Adams M.D."/>
            <person name="Hunkapiller M.W."/>
            <person name="Myers E.W."/>
            <person name="Venter J.C."/>
        </authorList>
    </citation>
    <scope>NUCLEOTIDE SEQUENCE [LARGE SCALE GENOMIC DNA]</scope>
</reference>
<reference key="5">
    <citation type="journal article" date="2004" name="Genome Res.">
        <title>The status, quality, and expansion of the NIH full-length cDNA project: the Mammalian Gene Collection (MGC).</title>
        <authorList>
            <consortium name="The MGC Project Team"/>
        </authorList>
    </citation>
    <scope>NUCLEOTIDE SEQUENCE [LARGE SCALE MRNA]</scope>
    <source>
        <tissue>Blood</tissue>
        <tissue>Lymph</tissue>
    </source>
</reference>
<reference key="6">
    <citation type="journal article" date="1994" name="J. Biol. Chem.">
        <title>The protein product of the c-cbl protooncogene is the 120-kDa tyrosine-phosphorylated protein in Jurkat cells activated via the T cell antigen receptor.</title>
        <authorList>
            <person name="Donovan J.A."/>
            <person name="Wange R.L."/>
            <person name="Langdon W.Y."/>
            <person name="Samelson L.E."/>
        </authorList>
    </citation>
    <scope>INTERACTION WITH CBL</scope>
</reference>
<reference key="7">
    <citation type="journal article" date="1996" name="Mol. Cell. Biol.">
        <title>In vivo and in vitro specificity of protein tyrosine kinases for immunoglobulin G receptor (FcgammaRII) phosphorylation.</title>
        <authorList>
            <person name="Bewarder N."/>
            <person name="Weinrich V."/>
            <person name="Budde P."/>
            <person name="Hartmann D."/>
            <person name="Flaswinkel H."/>
            <person name="Reth M."/>
            <person name="Frey J."/>
        </authorList>
    </citation>
    <scope>FUNCTION IN PHOSPHORYLATION OF FCGR2A; FCGR2B AND FCGR2C</scope>
</reference>
<reference key="8">
    <citation type="journal article" date="1999" name="J. Immunol.">
        <title>Early B cell factor is an activator of the B lymphoid kinase promoter in early B cell development.</title>
        <authorList>
            <person name="Akerblad P."/>
            <person name="Sigvardsson M."/>
        </authorList>
    </citation>
    <scope>INDUCTION</scope>
</reference>
<reference key="9">
    <citation type="journal article" date="2002" name="Biochem. J.">
        <title>IgA Fc receptor (FcalphaR) cross-linking recruits tyrosine kinases, phosphoinositide kinases and serine/threonine kinases to glycolipid rafts.</title>
        <authorList>
            <person name="Lang M.L."/>
            <person name="Chen Y.W."/>
            <person name="Shen L."/>
            <person name="Gao H."/>
            <person name="Lang G.A."/>
            <person name="Wade T.K."/>
            <person name="Wade W.F."/>
        </authorList>
    </citation>
    <scope>PHOSPHORYLATION</scope>
    <scope>SUBCELLULAR LOCATION</scope>
</reference>
<reference key="10">
    <citation type="journal article" date="2009" name="Proc. Natl. Acad. Sci. U.S.A.">
        <title>Mutations at the BLK locus linked to maturity onset diabetes of the young and beta-cell dysfunction.</title>
        <authorList>
            <person name="Borowiec M."/>
            <person name="Liew C.W."/>
            <person name="Thompson R."/>
            <person name="Boonyasrisawat W."/>
            <person name="Hu J."/>
            <person name="Mlynarski W.M."/>
            <person name="El Khattabi I."/>
            <person name="Kim S.H."/>
            <person name="Marselli L."/>
            <person name="Rich S.S."/>
            <person name="Krolewski A.S."/>
            <person name="Bonner-Weir S."/>
            <person name="Sharma A."/>
            <person name="Sale M."/>
            <person name="Mychaleckyj J.C."/>
            <person name="Kulkarni R.N."/>
            <person name="Doria A."/>
        </authorList>
    </citation>
    <scope>FUNCTION AS REGULATOR OF INSULIN SECRETION</scope>
    <scope>TISSUE SPECIFICITY</scope>
    <scope>INVOLVEMENT IN MODY11</scope>
    <scope>VARIANT THR-71</scope>
    <scope>CHARACTERIZATION OF VARIANT THR-71</scope>
</reference>
<reference key="11">
    <citation type="journal article" date="2011" name="BMC Syst. Biol.">
        <title>Initial characterization of the human central proteome.</title>
        <authorList>
            <person name="Burkard T.R."/>
            <person name="Planyavsky M."/>
            <person name="Kaupe I."/>
            <person name="Breitwieser F.P."/>
            <person name="Buerckstuemmer T."/>
            <person name="Bennett K.L."/>
            <person name="Superti-Furga G."/>
            <person name="Colinge J."/>
        </authorList>
    </citation>
    <scope>IDENTIFICATION BY MASS SPECTROMETRY [LARGE SCALE ANALYSIS]</scope>
</reference>
<reference key="12">
    <citation type="journal article" date="2018" name="Nature">
        <title>Nuclear cGAS suppresses DNA repair and promotes tumorigenesis.</title>
        <authorList>
            <person name="Liu H."/>
            <person name="Zhang H."/>
            <person name="Wu X."/>
            <person name="Ma D."/>
            <person name="Wu J."/>
            <person name="Wang L."/>
            <person name="Jiang Y."/>
            <person name="Fei Y."/>
            <person name="Zhu C."/>
            <person name="Tan R."/>
            <person name="Jungblut P."/>
            <person name="Pei G."/>
            <person name="Dorhoi A."/>
            <person name="Yan Q."/>
            <person name="Zhang F."/>
            <person name="Zheng R."/>
            <person name="Liu S."/>
            <person name="Liang H."/>
            <person name="Liu Z."/>
            <person name="Yang H."/>
            <person name="Chen J."/>
            <person name="Wang P."/>
            <person name="Tang T."/>
            <person name="Peng W."/>
            <person name="Hu Z."/>
            <person name="Xu Z."/>
            <person name="Huang X."/>
            <person name="Wang J."/>
            <person name="Li H."/>
            <person name="Zhou Y."/>
            <person name="Liu F."/>
            <person name="Yan D."/>
            <person name="Kaufmann S.H.E."/>
            <person name="Chen C."/>
            <person name="Mao Z."/>
            <person name="Ge B."/>
        </authorList>
    </citation>
    <scope>FUNCTION</scope>
    <scope>CATALYTIC ACTIVITY</scope>
</reference>
<reference key="13">
    <citation type="journal article" date="2007" name="Nature">
        <title>Patterns of somatic mutation in human cancer genomes.</title>
        <authorList>
            <person name="Greenman C."/>
            <person name="Stephens P."/>
            <person name="Smith R."/>
            <person name="Dalgliesh G.L."/>
            <person name="Hunter C."/>
            <person name="Bignell G."/>
            <person name="Davies H."/>
            <person name="Teague J."/>
            <person name="Butler A."/>
            <person name="Stevens C."/>
            <person name="Edkins S."/>
            <person name="O'Meara S."/>
            <person name="Vastrik I."/>
            <person name="Schmidt E.E."/>
            <person name="Avis T."/>
            <person name="Barthorpe S."/>
            <person name="Bhamra G."/>
            <person name="Buck G."/>
            <person name="Choudhury B."/>
            <person name="Clements J."/>
            <person name="Cole J."/>
            <person name="Dicks E."/>
            <person name="Forbes S."/>
            <person name="Gray K."/>
            <person name="Halliday K."/>
            <person name="Harrison R."/>
            <person name="Hills K."/>
            <person name="Hinton J."/>
            <person name="Jenkinson A."/>
            <person name="Jones D."/>
            <person name="Menzies A."/>
            <person name="Mironenko T."/>
            <person name="Perry J."/>
            <person name="Raine K."/>
            <person name="Richardson D."/>
            <person name="Shepherd R."/>
            <person name="Small A."/>
            <person name="Tofts C."/>
            <person name="Varian J."/>
            <person name="Webb T."/>
            <person name="West S."/>
            <person name="Widaa S."/>
            <person name="Yates A."/>
            <person name="Cahill D.P."/>
            <person name="Louis D.N."/>
            <person name="Goldstraw P."/>
            <person name="Nicholson A.G."/>
            <person name="Brasseur F."/>
            <person name="Looijenga L."/>
            <person name="Weber B.L."/>
            <person name="Chiew Y.-E."/>
            <person name="DeFazio A."/>
            <person name="Greaves M.F."/>
            <person name="Green A.R."/>
            <person name="Campbell P."/>
            <person name="Birney E."/>
            <person name="Easton D.F."/>
            <person name="Chenevix-Trench G."/>
            <person name="Tan M.-H."/>
            <person name="Khoo S.K."/>
            <person name="Teh B.T."/>
            <person name="Yuen S.T."/>
            <person name="Leung S.Y."/>
            <person name="Wooster R."/>
            <person name="Futreal P.A."/>
            <person name="Stratton M.R."/>
        </authorList>
    </citation>
    <scope>VARIANTS [LARGE SCALE ANALYSIS] ILE-48 AND THR-71</scope>
</reference>
<evidence type="ECO:0000250" key="1"/>
<evidence type="ECO:0000250" key="2">
    <source>
        <dbReference type="UniProtKB" id="P16277"/>
    </source>
</evidence>
<evidence type="ECO:0000255" key="3">
    <source>
        <dbReference type="PROSITE-ProRule" id="PRU00159"/>
    </source>
</evidence>
<evidence type="ECO:0000255" key="4">
    <source>
        <dbReference type="PROSITE-ProRule" id="PRU00191"/>
    </source>
</evidence>
<evidence type="ECO:0000255" key="5">
    <source>
        <dbReference type="PROSITE-ProRule" id="PRU00192"/>
    </source>
</evidence>
<evidence type="ECO:0000256" key="6">
    <source>
        <dbReference type="SAM" id="MobiDB-lite"/>
    </source>
</evidence>
<evidence type="ECO:0000269" key="7">
    <source>
    </source>
</evidence>
<evidence type="ECO:0000269" key="8">
    <source>
    </source>
</evidence>
<evidence type="ECO:0000269" key="9">
    <source>
    </source>
</evidence>
<evidence type="ECO:0000269" key="10">
    <source>
    </source>
</evidence>
<evidence type="ECO:0000269" key="11">
    <source>
    </source>
</evidence>
<evidence type="ECO:0000305" key="12"/>